<proteinExistence type="inferred from homology"/>
<reference key="1">
    <citation type="journal article" date="2003" name="Genome Res.">
        <title>Genome sequence of an M3 strain of Streptococcus pyogenes reveals a large-scale genomic rearrangement in invasive strains and new insights into phage evolution.</title>
        <authorList>
            <person name="Nakagawa I."/>
            <person name="Kurokawa K."/>
            <person name="Yamashita A."/>
            <person name="Nakata M."/>
            <person name="Tomiyasu Y."/>
            <person name="Okahashi N."/>
            <person name="Kawabata S."/>
            <person name="Yamazaki K."/>
            <person name="Shiba T."/>
            <person name="Yasunaga T."/>
            <person name="Hayashi H."/>
            <person name="Hattori M."/>
            <person name="Hamada S."/>
        </authorList>
    </citation>
    <scope>NUCLEOTIDE SEQUENCE [LARGE SCALE GENOMIC DNA]</scope>
    <source>
        <strain>SSI-1</strain>
    </source>
</reference>
<comment type="function">
    <text evidence="1">Bidirectionally degrades single-stranded DNA into large acid-insoluble oligonucleotides, which are then degraded further into small acid-soluble oligonucleotides.</text>
</comment>
<comment type="catalytic activity">
    <reaction evidence="1">
        <text>Exonucleolytic cleavage in either 5'- to 3'- or 3'- to 5'-direction to yield nucleoside 5'-phosphates.</text>
        <dbReference type="EC" id="3.1.11.6"/>
    </reaction>
</comment>
<comment type="subunit">
    <text evidence="1">Heterooligomer composed of large and small subunits.</text>
</comment>
<comment type="subcellular location">
    <subcellularLocation>
        <location evidence="1">Cytoplasm</location>
    </subcellularLocation>
</comment>
<comment type="similarity">
    <text evidence="1">Belongs to the XseA family.</text>
</comment>
<evidence type="ECO:0000255" key="1">
    <source>
        <dbReference type="HAMAP-Rule" id="MF_00378"/>
    </source>
</evidence>
<sequence length="446" mass="50456">MADYLTVTHLTKYLKLKFDRDPYLERVYLTGQVSNFRKRPTHQYFSLKDESAVIQATMWAGVYKKLGFDLEEGMKINVIGRVQLYEPSGSYSIVIEKAEPDGIGALALQFEQLKKKLTAEGYFEQKHKQPLPQFVSKIGVITSPSGAVIRDIITTVSRRFPGVEILLFPTKVQGDGAAQEVVANIRRANQREDLDLLIVGRGGGSIEDLWAFNEEIVVQAIFESQLPVISSVGHETDTTLADFVADRRAATPTAAAELATPITKTDLMSWIVERQNRSYQACLRRIKQRQEWVDKLSQSVIFRQPERLYDAYLQKIDRLSMTLMNTMKDRLSSAKENKVQLDHALANSQLQTKIERYQDRVATAKRLLMANMASQYDSQLARFEKAQDALLSLDASRIIARGYAMIEKNQALVASVSQITKGDQLTIKMRDGQLDVEVKDVKNENI</sequence>
<feature type="chain" id="PRO_0000411665" description="Exodeoxyribonuclease 7 large subunit">
    <location>
        <begin position="1"/>
        <end position="446"/>
    </location>
</feature>
<accession>P0DH51</accession>
<accession>P67453</accession>
<accession>Q99YX3</accession>
<gene>
    <name evidence="1" type="primary">xseA</name>
    <name type="ordered locus">SPs0706</name>
</gene>
<name>EX7L_STRPQ</name>
<organism>
    <name type="scientific">Streptococcus pyogenes serotype M3 (strain SSI-1)</name>
    <dbReference type="NCBI Taxonomy" id="193567"/>
    <lineage>
        <taxon>Bacteria</taxon>
        <taxon>Bacillati</taxon>
        <taxon>Bacillota</taxon>
        <taxon>Bacilli</taxon>
        <taxon>Lactobacillales</taxon>
        <taxon>Streptococcaceae</taxon>
        <taxon>Streptococcus</taxon>
    </lineage>
</organism>
<keyword id="KW-0963">Cytoplasm</keyword>
<keyword id="KW-0269">Exonuclease</keyword>
<keyword id="KW-0378">Hydrolase</keyword>
<keyword id="KW-0540">Nuclease</keyword>
<dbReference type="EC" id="3.1.11.6" evidence="1"/>
<dbReference type="EMBL" id="BA000034">
    <property type="protein sequence ID" value="BAC63801.1"/>
    <property type="molecule type" value="Genomic_DNA"/>
</dbReference>
<dbReference type="RefSeq" id="WP_002992349.1">
    <property type="nucleotide sequence ID" value="NC_004606.1"/>
</dbReference>
<dbReference type="SMR" id="P0DH51"/>
<dbReference type="GeneID" id="69900607"/>
<dbReference type="KEGG" id="sps:SPs0706"/>
<dbReference type="HOGENOM" id="CLU_023625_3_1_9"/>
<dbReference type="GO" id="GO:0005737">
    <property type="term" value="C:cytoplasm"/>
    <property type="evidence" value="ECO:0007669"/>
    <property type="project" value="UniProtKB-SubCell"/>
</dbReference>
<dbReference type="GO" id="GO:0009318">
    <property type="term" value="C:exodeoxyribonuclease VII complex"/>
    <property type="evidence" value="ECO:0007669"/>
    <property type="project" value="InterPro"/>
</dbReference>
<dbReference type="GO" id="GO:0008855">
    <property type="term" value="F:exodeoxyribonuclease VII activity"/>
    <property type="evidence" value="ECO:0007669"/>
    <property type="project" value="UniProtKB-UniRule"/>
</dbReference>
<dbReference type="GO" id="GO:0003676">
    <property type="term" value="F:nucleic acid binding"/>
    <property type="evidence" value="ECO:0007669"/>
    <property type="project" value="InterPro"/>
</dbReference>
<dbReference type="GO" id="GO:0006308">
    <property type="term" value="P:DNA catabolic process"/>
    <property type="evidence" value="ECO:0007669"/>
    <property type="project" value="UniProtKB-UniRule"/>
</dbReference>
<dbReference type="CDD" id="cd04489">
    <property type="entry name" value="ExoVII_LU_OBF"/>
    <property type="match status" value="1"/>
</dbReference>
<dbReference type="HAMAP" id="MF_00378">
    <property type="entry name" value="Exonuc_7_L"/>
    <property type="match status" value="1"/>
</dbReference>
<dbReference type="InterPro" id="IPR003753">
    <property type="entry name" value="Exonuc_VII_L"/>
</dbReference>
<dbReference type="InterPro" id="IPR020579">
    <property type="entry name" value="Exonuc_VII_lsu_C"/>
</dbReference>
<dbReference type="InterPro" id="IPR025824">
    <property type="entry name" value="OB-fold_nuc-bd_dom"/>
</dbReference>
<dbReference type="NCBIfam" id="TIGR00237">
    <property type="entry name" value="xseA"/>
    <property type="match status" value="1"/>
</dbReference>
<dbReference type="PANTHER" id="PTHR30008">
    <property type="entry name" value="EXODEOXYRIBONUCLEASE 7 LARGE SUBUNIT"/>
    <property type="match status" value="1"/>
</dbReference>
<dbReference type="PANTHER" id="PTHR30008:SF0">
    <property type="entry name" value="EXODEOXYRIBONUCLEASE 7 LARGE SUBUNIT"/>
    <property type="match status" value="1"/>
</dbReference>
<dbReference type="Pfam" id="PF02601">
    <property type="entry name" value="Exonuc_VII_L"/>
    <property type="match status" value="1"/>
</dbReference>
<dbReference type="Pfam" id="PF13742">
    <property type="entry name" value="tRNA_anti_2"/>
    <property type="match status" value="1"/>
</dbReference>
<protein>
    <recommendedName>
        <fullName evidence="1">Exodeoxyribonuclease 7 large subunit</fullName>
        <ecNumber evidence="1">3.1.11.6</ecNumber>
    </recommendedName>
    <alternativeName>
        <fullName evidence="1">Exodeoxyribonuclease VII large subunit</fullName>
        <shortName evidence="1">Exonuclease VII large subunit</shortName>
    </alternativeName>
</protein>